<name>CSPA_SALEN</name>
<keyword id="KW-0010">Activator</keyword>
<keyword id="KW-0963">Cytoplasm</keyword>
<keyword id="KW-0238">DNA-binding</keyword>
<keyword id="KW-0346">Stress response</keyword>
<keyword id="KW-0804">Transcription</keyword>
<keyword id="KW-0805">Transcription regulation</keyword>
<evidence type="ECO:0000250" key="1"/>
<organism>
    <name type="scientific">Salmonella enteritidis</name>
    <dbReference type="NCBI Taxonomy" id="149539"/>
    <lineage>
        <taxon>Bacteria</taxon>
        <taxon>Pseudomonadati</taxon>
        <taxon>Pseudomonadota</taxon>
        <taxon>Gammaproteobacteria</taxon>
        <taxon>Enterobacterales</taxon>
        <taxon>Enterobacteriaceae</taxon>
        <taxon>Salmonella</taxon>
    </lineage>
</organism>
<proteinExistence type="inferred from homology"/>
<comment type="function">
    <text evidence="1">Binds to and stimulates the transcription of the CCAAT-containing, cold-shock-inducible promoters of the H-NS and GyrA proteins. Also binds to the inverted repeat 5'-ATTGG-3' (By similarity).</text>
</comment>
<comment type="subcellular location">
    <subcellularLocation>
        <location evidence="1">Cytoplasm</location>
    </subcellularLocation>
</comment>
<comment type="induction">
    <text evidence="1">In response to low temperature.</text>
</comment>
<sequence>MSGKMTGIVKWFNADKGFGFITPDDGSKDVFVHFSAIQNDGYKSLDEGQKVSFTIESGAKGPAAGNVTSL</sequence>
<gene>
    <name type="primary">cspA</name>
</gene>
<feature type="initiator methionine" description="Removed" evidence="1">
    <location>
        <position position="1"/>
    </location>
</feature>
<feature type="chain" id="PRO_0000100236" description="Cold shock protein CspA">
    <location>
        <begin position="2"/>
        <end position="70"/>
    </location>
</feature>
<feature type="domain" description="CSD">
    <location>
        <begin position="7"/>
        <end position="67"/>
    </location>
</feature>
<reference key="1">
    <citation type="journal article" date="1998" name="Curr. Microbiol.">
        <title>Growth, survival and characterization of cspA in Salmonella enteritidis following cold shock.</title>
        <authorList>
            <person name="Jeffreys A.G."/>
            <person name="Hak K.M."/>
            <person name="Steffan R.J."/>
            <person name="Foster J.W."/>
            <person name="Bej A.K."/>
        </authorList>
    </citation>
    <scope>NUCLEOTIDE SEQUENCE [GENOMIC DNA]</scope>
    <source>
        <strain>ATCC 13076 / CDC K-1891</strain>
    </source>
</reference>
<protein>
    <recommendedName>
        <fullName>Cold shock protein CspA</fullName>
        <shortName>CSP-A</shortName>
    </recommendedName>
    <alternativeName>
        <fullName>7.4 kDa cold shock protein</fullName>
    </alternativeName>
    <alternativeName>
        <fullName>CS7.4</fullName>
    </alternativeName>
</protein>
<accession>P0A9Y5</accession>
<accession>P15277</accession>
<accession>P37410</accession>
<accession>Q54170</accession>
<dbReference type="EMBL" id="AF017276">
    <property type="protein sequence ID" value="AAB69447.1"/>
    <property type="molecule type" value="Genomic_DNA"/>
</dbReference>
<dbReference type="RefSeq" id="WP_000014594.1">
    <property type="nucleotide sequence ID" value="NZ_WIDC01000034.1"/>
</dbReference>
<dbReference type="SMR" id="P0A9Y5"/>
<dbReference type="GeneID" id="93778287"/>
<dbReference type="PATRIC" id="fig|149539.316.peg.3740"/>
<dbReference type="OMA" id="MDNKSQG"/>
<dbReference type="GO" id="GO:0005829">
    <property type="term" value="C:cytosol"/>
    <property type="evidence" value="ECO:0007669"/>
    <property type="project" value="UniProtKB-ARBA"/>
</dbReference>
<dbReference type="GO" id="GO:0003677">
    <property type="term" value="F:DNA binding"/>
    <property type="evidence" value="ECO:0007669"/>
    <property type="project" value="UniProtKB-KW"/>
</dbReference>
<dbReference type="CDD" id="cd04458">
    <property type="entry name" value="CSP_CDS"/>
    <property type="match status" value="1"/>
</dbReference>
<dbReference type="FunFam" id="2.40.50.140:FF:000006">
    <property type="entry name" value="Cold shock protein CspC"/>
    <property type="match status" value="1"/>
</dbReference>
<dbReference type="Gene3D" id="2.40.50.140">
    <property type="entry name" value="Nucleic acid-binding proteins"/>
    <property type="match status" value="1"/>
</dbReference>
<dbReference type="InterPro" id="IPR012156">
    <property type="entry name" value="Cold_shock_CspA"/>
</dbReference>
<dbReference type="InterPro" id="IPR050181">
    <property type="entry name" value="Cold_shock_domain"/>
</dbReference>
<dbReference type="InterPro" id="IPR011129">
    <property type="entry name" value="CSD"/>
</dbReference>
<dbReference type="InterPro" id="IPR019844">
    <property type="entry name" value="CSD_CS"/>
</dbReference>
<dbReference type="InterPro" id="IPR002059">
    <property type="entry name" value="CSP_DNA-bd"/>
</dbReference>
<dbReference type="InterPro" id="IPR012340">
    <property type="entry name" value="NA-bd_OB-fold"/>
</dbReference>
<dbReference type="NCBIfam" id="NF007679">
    <property type="entry name" value="PRK10354.1"/>
    <property type="match status" value="1"/>
</dbReference>
<dbReference type="PANTHER" id="PTHR11544">
    <property type="entry name" value="COLD SHOCK DOMAIN CONTAINING PROTEINS"/>
    <property type="match status" value="1"/>
</dbReference>
<dbReference type="Pfam" id="PF00313">
    <property type="entry name" value="CSD"/>
    <property type="match status" value="1"/>
</dbReference>
<dbReference type="PIRSF" id="PIRSF002599">
    <property type="entry name" value="Cold_shock_A"/>
    <property type="match status" value="1"/>
</dbReference>
<dbReference type="PRINTS" id="PR00050">
    <property type="entry name" value="COLDSHOCK"/>
</dbReference>
<dbReference type="SMART" id="SM00357">
    <property type="entry name" value="CSP"/>
    <property type="match status" value="1"/>
</dbReference>
<dbReference type="SUPFAM" id="SSF50249">
    <property type="entry name" value="Nucleic acid-binding proteins"/>
    <property type="match status" value="1"/>
</dbReference>
<dbReference type="PROSITE" id="PS00352">
    <property type="entry name" value="CSD_1"/>
    <property type="match status" value="1"/>
</dbReference>
<dbReference type="PROSITE" id="PS51857">
    <property type="entry name" value="CSD_2"/>
    <property type="match status" value="1"/>
</dbReference>